<dbReference type="EC" id="1.1.1.403" evidence="3"/>
<dbReference type="EMBL" id="CP000480">
    <property type="protein sequence ID" value="ABK74381.1"/>
    <property type="molecule type" value="Genomic_DNA"/>
</dbReference>
<dbReference type="EMBL" id="CP001663">
    <property type="protein sequence ID" value="AFP39986.1"/>
    <property type="molecule type" value="Genomic_DNA"/>
</dbReference>
<dbReference type="RefSeq" id="WP_011729199.1">
    <property type="nucleotide sequence ID" value="NZ_SIJM01000008.1"/>
</dbReference>
<dbReference type="RefSeq" id="YP_887910.1">
    <property type="nucleotide sequence ID" value="NC_008596.1"/>
</dbReference>
<dbReference type="SMR" id="A0QYC2"/>
<dbReference type="STRING" id="246196.MSMEG_3607"/>
<dbReference type="PaxDb" id="246196-MSMEI_3523"/>
<dbReference type="GeneID" id="93458363"/>
<dbReference type="KEGG" id="msb:LJ00_17940"/>
<dbReference type="KEGG" id="msg:MSMEI_3523"/>
<dbReference type="KEGG" id="msm:MSMEG_3607"/>
<dbReference type="PATRIC" id="fig|246196.19.peg.3556"/>
<dbReference type="eggNOG" id="COG1028">
    <property type="taxonomic scope" value="Bacteria"/>
</dbReference>
<dbReference type="OrthoDB" id="9775296at2"/>
<dbReference type="BioCyc" id="MetaCyc:MONOMER-19892"/>
<dbReference type="BRENDA" id="1.1.1.403">
    <property type="organism ID" value="3512"/>
</dbReference>
<dbReference type="UniPathway" id="UPA01065"/>
<dbReference type="Proteomes" id="UP000000757">
    <property type="component" value="Chromosome"/>
</dbReference>
<dbReference type="Proteomes" id="UP000006158">
    <property type="component" value="Chromosome"/>
</dbReference>
<dbReference type="GO" id="GO:0030246">
    <property type="term" value="F:carbohydrate binding"/>
    <property type="evidence" value="ECO:0000314"/>
    <property type="project" value="UniProtKB"/>
</dbReference>
<dbReference type="GO" id="GO:0047880">
    <property type="term" value="F:erythrulose reductase activity"/>
    <property type="evidence" value="ECO:0000314"/>
    <property type="project" value="UniProtKB"/>
</dbReference>
<dbReference type="GO" id="GO:0016052">
    <property type="term" value="P:carbohydrate catabolic process"/>
    <property type="evidence" value="ECO:0000315"/>
    <property type="project" value="UniProtKB"/>
</dbReference>
<dbReference type="GO" id="GO:0009758">
    <property type="term" value="P:carbohydrate utilization"/>
    <property type="evidence" value="ECO:0000315"/>
    <property type="project" value="UniProtKB"/>
</dbReference>
<dbReference type="GO" id="GO:0071322">
    <property type="term" value="P:cellular response to carbohydrate stimulus"/>
    <property type="evidence" value="ECO:0000314"/>
    <property type="project" value="UniProtKB"/>
</dbReference>
<dbReference type="CDD" id="cd05233">
    <property type="entry name" value="SDR_c"/>
    <property type="match status" value="1"/>
</dbReference>
<dbReference type="FunFam" id="3.40.50.720:FF:000084">
    <property type="entry name" value="Short-chain dehydrogenase reductase"/>
    <property type="match status" value="1"/>
</dbReference>
<dbReference type="Gene3D" id="3.40.50.720">
    <property type="entry name" value="NAD(P)-binding Rossmann-like Domain"/>
    <property type="match status" value="1"/>
</dbReference>
<dbReference type="InterPro" id="IPR036291">
    <property type="entry name" value="NAD(P)-bd_dom_sf"/>
</dbReference>
<dbReference type="InterPro" id="IPR020904">
    <property type="entry name" value="Sc_DH/Rdtase_CS"/>
</dbReference>
<dbReference type="InterPro" id="IPR002347">
    <property type="entry name" value="SDR_fam"/>
</dbReference>
<dbReference type="NCBIfam" id="NF005309">
    <property type="entry name" value="PRK06841.1"/>
    <property type="match status" value="1"/>
</dbReference>
<dbReference type="NCBIfam" id="NF005559">
    <property type="entry name" value="PRK07231.1"/>
    <property type="match status" value="1"/>
</dbReference>
<dbReference type="NCBIfam" id="NF009466">
    <property type="entry name" value="PRK12826.1-2"/>
    <property type="match status" value="1"/>
</dbReference>
<dbReference type="PANTHER" id="PTHR42760:SF115">
    <property type="entry name" value="3-OXOACYL-[ACYL-CARRIER-PROTEIN] REDUCTASE FABG"/>
    <property type="match status" value="1"/>
</dbReference>
<dbReference type="PANTHER" id="PTHR42760">
    <property type="entry name" value="SHORT-CHAIN DEHYDROGENASES/REDUCTASES FAMILY MEMBER"/>
    <property type="match status" value="1"/>
</dbReference>
<dbReference type="Pfam" id="PF13561">
    <property type="entry name" value="adh_short_C2"/>
    <property type="match status" value="1"/>
</dbReference>
<dbReference type="PRINTS" id="PR00081">
    <property type="entry name" value="GDHRDH"/>
</dbReference>
<dbReference type="PRINTS" id="PR00080">
    <property type="entry name" value="SDRFAMILY"/>
</dbReference>
<dbReference type="SMART" id="SM00822">
    <property type="entry name" value="PKS_KR"/>
    <property type="match status" value="1"/>
</dbReference>
<dbReference type="SUPFAM" id="SSF51735">
    <property type="entry name" value="NAD(P)-binding Rossmann-fold domains"/>
    <property type="match status" value="1"/>
</dbReference>
<dbReference type="PROSITE" id="PS00061">
    <property type="entry name" value="ADH_SHORT"/>
    <property type="match status" value="1"/>
</dbReference>
<comment type="function">
    <text evidence="3">Catalyzes the NAD-dependent reversible oxidation of D-threitol. Involved in the degradation pathway of D-threitol, that allows M.smegmatis to grow on this compound as the sole carbon source. Does not catalyze the oxidation of xylitol, L-sorbitol, and L-sorbose.</text>
</comment>
<comment type="catalytic activity">
    <reaction evidence="3">
        <text>D-threitol + NAD(+) = D-erythrulose + NADH + H(+)</text>
        <dbReference type="Rhea" id="RHEA:48748"/>
        <dbReference type="ChEBI" id="CHEBI:15378"/>
        <dbReference type="ChEBI" id="CHEBI:16023"/>
        <dbReference type="ChEBI" id="CHEBI:48300"/>
        <dbReference type="ChEBI" id="CHEBI:57540"/>
        <dbReference type="ChEBI" id="CHEBI:57945"/>
        <dbReference type="EC" id="1.1.1.403"/>
    </reaction>
</comment>
<comment type="biophysicochemical properties">
    <kinetics>
        <KM evidence="3">0.52 mM for D-threitol</KM>
        <KM evidence="3">1.2 mM for D-threose</KM>
        <KM evidence="3">0.048 mM for D-erythrulose</KM>
        <text evidence="3">kcat is 6.97 sec(-1) with D-threitol as substrate. kcat is 0.71 sec(-1) with D-threose as substrate. kcat is 7.32 sec(-1) with D-erythrulose as substrate.</text>
    </kinetics>
</comment>
<comment type="pathway">
    <text evidence="3">Carbohydrate metabolism; D-threitol degradation.</text>
</comment>
<comment type="induction">
    <text evidence="3">Up-regulated during growth on D-threitol relative to growth on glycerol.</text>
</comment>
<comment type="disruption phenotype">
    <text evidence="3">Complete loss of the ability to grow on D-threitol.</text>
</comment>
<comment type="similarity">
    <text evidence="5">Belongs to the short-chain dehydrogenases/reductases (SDR) family.</text>
</comment>
<accession>A0QYC2</accession>
<feature type="chain" id="PRO_0000435514" description="D-threitol dehydrogenase">
    <location>
        <begin position="1"/>
        <end position="260"/>
    </location>
</feature>
<feature type="active site" description="Proton acceptor" evidence="2">
    <location>
        <position position="166"/>
    </location>
</feature>
<feature type="binding site" evidence="1">
    <location>
        <begin position="21"/>
        <end position="50"/>
    </location>
    <ligand>
        <name>NAD(+)</name>
        <dbReference type="ChEBI" id="CHEBI:57540"/>
    </ligand>
</feature>
<feature type="binding site" evidence="1">
    <location>
        <position position="170"/>
    </location>
    <ligand>
        <name>NAD(+)</name>
        <dbReference type="ChEBI" id="CHEBI:57540"/>
    </ligand>
</feature>
<name>DTHD_MYCS2</name>
<reference key="1">
    <citation type="submission" date="2006-10" db="EMBL/GenBank/DDBJ databases">
        <authorList>
            <person name="Fleischmann R.D."/>
            <person name="Dodson R.J."/>
            <person name="Haft D.H."/>
            <person name="Merkel J.S."/>
            <person name="Nelson W.C."/>
            <person name="Fraser C.M."/>
        </authorList>
    </citation>
    <scope>NUCLEOTIDE SEQUENCE [LARGE SCALE GENOMIC DNA]</scope>
    <source>
        <strain>ATCC 700084 / mc(2)155</strain>
    </source>
</reference>
<reference key="2">
    <citation type="journal article" date="2007" name="Genome Biol.">
        <title>Interrupted coding sequences in Mycobacterium smegmatis: authentic mutations or sequencing errors?</title>
        <authorList>
            <person name="Deshayes C."/>
            <person name="Perrodou E."/>
            <person name="Gallien S."/>
            <person name="Euphrasie D."/>
            <person name="Schaeffer C."/>
            <person name="Van-Dorsselaer A."/>
            <person name="Poch O."/>
            <person name="Lecompte O."/>
            <person name="Reyrat J.-M."/>
        </authorList>
    </citation>
    <scope>NUCLEOTIDE SEQUENCE [LARGE SCALE GENOMIC DNA]</scope>
    <source>
        <strain>ATCC 700084 / mc(2)155</strain>
    </source>
</reference>
<reference key="3">
    <citation type="journal article" date="2009" name="Genome Res.">
        <title>Ortho-proteogenomics: multiple proteomes investigation through orthology and a new MS-based protocol.</title>
        <authorList>
            <person name="Gallien S."/>
            <person name="Perrodou E."/>
            <person name="Carapito C."/>
            <person name="Deshayes C."/>
            <person name="Reyrat J.-M."/>
            <person name="Van Dorsselaer A."/>
            <person name="Poch O."/>
            <person name="Schaeffer C."/>
            <person name="Lecompte O."/>
        </authorList>
    </citation>
    <scope>NUCLEOTIDE SEQUENCE [LARGE SCALE GENOMIC DNA]</scope>
    <source>
        <strain>ATCC 700084 / mc(2)155</strain>
    </source>
</reference>
<reference key="4">
    <citation type="journal article" date="2015" name="J. Am. Chem. Soc.">
        <title>A general strategy for the discovery of metabolic pathways: D-threitol, L-threitol, and erythritol utilization in Mycobacterium smegmatis.</title>
        <authorList>
            <person name="Huang H."/>
            <person name="Carter M.S."/>
            <person name="Vetting M.W."/>
            <person name="Al-Obaidi N."/>
            <person name="Patskovsky Y."/>
            <person name="Almo S.C."/>
            <person name="Gerlt J.A."/>
        </authorList>
    </citation>
    <scope>FUNCTION</scope>
    <scope>CATALYTIC ACTIVITY</scope>
    <scope>SUBSTRATE SPECIFICITY</scope>
    <scope>BIOPHYSICOCHEMICAL PROPERTIES</scope>
    <scope>INDUCTION</scope>
    <scope>DISRUPTION PHENOTYPE</scope>
    <scope>PATHWAY</scope>
    <source>
        <strain>ATCC 700084 / mc(2)155</strain>
    </source>
</reference>
<gene>
    <name evidence="4" type="primary">dthD</name>
    <name evidence="6" type="ordered locus">MSMEG_3607</name>
    <name evidence="7" type="ordered locus">MSMEI_3523</name>
</gene>
<sequence>MTQAQELSVDFDFRLDGKVALVTGAASGIGAAIASAYATKGARIAAVDLNAEGAEALAAQLGGDRGAHRGFACDVADAASVQAAADAVAAEFGRIDILVNSAGVARLAPAEELSLQDWDSTLAINLSGTFLMCQAVGKRMLEAGGGAIVNMASQAATVALDQHVAYCASKFGVVGVSKVLAAEWGGRGVRVNTISPTVVLTELGHKAWDGPRGDALKKLIPTGRFAYPDEIAAAAVFLASDAAAMINGADLVIDGGYTIK</sequence>
<organism>
    <name type="scientific">Mycolicibacterium smegmatis (strain ATCC 700084 / mc(2)155)</name>
    <name type="common">Mycobacterium smegmatis</name>
    <dbReference type="NCBI Taxonomy" id="246196"/>
    <lineage>
        <taxon>Bacteria</taxon>
        <taxon>Bacillati</taxon>
        <taxon>Actinomycetota</taxon>
        <taxon>Actinomycetes</taxon>
        <taxon>Mycobacteriales</taxon>
        <taxon>Mycobacteriaceae</taxon>
        <taxon>Mycolicibacterium</taxon>
    </lineage>
</organism>
<proteinExistence type="evidence at protein level"/>
<keyword id="KW-0119">Carbohydrate metabolism</keyword>
<keyword id="KW-0520">NAD</keyword>
<keyword id="KW-0560">Oxidoreductase</keyword>
<keyword id="KW-1185">Reference proteome</keyword>
<evidence type="ECO:0000250" key="1">
    <source>
        <dbReference type="UniProtKB" id="Q7Z4W1"/>
    </source>
</evidence>
<evidence type="ECO:0000255" key="2">
    <source>
        <dbReference type="PROSITE-ProRule" id="PRU10001"/>
    </source>
</evidence>
<evidence type="ECO:0000269" key="3">
    <source>
    </source>
</evidence>
<evidence type="ECO:0000303" key="4">
    <source>
    </source>
</evidence>
<evidence type="ECO:0000305" key="5"/>
<evidence type="ECO:0000312" key="6">
    <source>
        <dbReference type="EMBL" id="ABK74381.1"/>
    </source>
</evidence>
<evidence type="ECO:0000312" key="7">
    <source>
        <dbReference type="EMBL" id="AFP39986.1"/>
    </source>
</evidence>
<protein>
    <recommendedName>
        <fullName evidence="4">D-threitol dehydrogenase</fullName>
        <ecNumber evidence="3">1.1.1.403</ecNumber>
    </recommendedName>
</protein>